<sequence length="132" mass="14372">MSVNDPLGDMLTRIRNAQLRGKSTVSSPASKLRAWVLDVLQAEGYIRGYEKKETENGQGELVISLKYFEGTPVIRELKRVSKPGRRVYMATKDLPSVRNGLGVSIISTPKGVMSDASARSANVGGEVLCTVF</sequence>
<keyword id="KW-0687">Ribonucleoprotein</keyword>
<keyword id="KW-0689">Ribosomal protein</keyword>
<keyword id="KW-0694">RNA-binding</keyword>
<keyword id="KW-0699">rRNA-binding</keyword>
<accession>A4WVJ4</accession>
<proteinExistence type="inferred from homology"/>
<organism>
    <name type="scientific">Cereibacter sphaeroides (strain ATCC 17025 / ATH 2.4.3)</name>
    <name type="common">Rhodobacter sphaeroides</name>
    <dbReference type="NCBI Taxonomy" id="349102"/>
    <lineage>
        <taxon>Bacteria</taxon>
        <taxon>Pseudomonadati</taxon>
        <taxon>Pseudomonadota</taxon>
        <taxon>Alphaproteobacteria</taxon>
        <taxon>Rhodobacterales</taxon>
        <taxon>Paracoccaceae</taxon>
        <taxon>Cereibacter</taxon>
    </lineage>
</organism>
<protein>
    <recommendedName>
        <fullName evidence="1">Small ribosomal subunit protein uS8</fullName>
    </recommendedName>
    <alternativeName>
        <fullName evidence="2">30S ribosomal protein S8</fullName>
    </alternativeName>
</protein>
<reference key="1">
    <citation type="submission" date="2007-04" db="EMBL/GenBank/DDBJ databases">
        <title>Complete sequence of chromosome of Rhodobacter sphaeroides ATCC 17025.</title>
        <authorList>
            <consortium name="US DOE Joint Genome Institute"/>
            <person name="Copeland A."/>
            <person name="Lucas S."/>
            <person name="Lapidus A."/>
            <person name="Barry K."/>
            <person name="Detter J.C."/>
            <person name="Glavina del Rio T."/>
            <person name="Hammon N."/>
            <person name="Israni S."/>
            <person name="Dalin E."/>
            <person name="Tice H."/>
            <person name="Pitluck S."/>
            <person name="Chertkov O."/>
            <person name="Brettin T."/>
            <person name="Bruce D."/>
            <person name="Han C."/>
            <person name="Schmutz J."/>
            <person name="Larimer F."/>
            <person name="Land M."/>
            <person name="Hauser L."/>
            <person name="Kyrpides N."/>
            <person name="Kim E."/>
            <person name="Richardson P."/>
            <person name="Mackenzie C."/>
            <person name="Choudhary M."/>
            <person name="Donohue T.J."/>
            <person name="Kaplan S."/>
        </authorList>
    </citation>
    <scope>NUCLEOTIDE SEQUENCE [LARGE SCALE GENOMIC DNA]</scope>
    <source>
        <strain>ATCC 17025 / ATH 2.4.3</strain>
    </source>
</reference>
<dbReference type="EMBL" id="CP000661">
    <property type="protein sequence ID" value="ABP71408.1"/>
    <property type="molecule type" value="Genomic_DNA"/>
</dbReference>
<dbReference type="SMR" id="A4WVJ4"/>
<dbReference type="STRING" id="349102.Rsph17025_2520"/>
<dbReference type="KEGG" id="rsq:Rsph17025_2520"/>
<dbReference type="eggNOG" id="COG0096">
    <property type="taxonomic scope" value="Bacteria"/>
</dbReference>
<dbReference type="HOGENOM" id="CLU_098428_0_0_5"/>
<dbReference type="BioCyc" id="RSPH349102:G1G8M-2598-MONOMER"/>
<dbReference type="GO" id="GO:1990904">
    <property type="term" value="C:ribonucleoprotein complex"/>
    <property type="evidence" value="ECO:0007669"/>
    <property type="project" value="UniProtKB-KW"/>
</dbReference>
<dbReference type="GO" id="GO:0005840">
    <property type="term" value="C:ribosome"/>
    <property type="evidence" value="ECO:0007669"/>
    <property type="project" value="UniProtKB-KW"/>
</dbReference>
<dbReference type="GO" id="GO:0019843">
    <property type="term" value="F:rRNA binding"/>
    <property type="evidence" value="ECO:0007669"/>
    <property type="project" value="UniProtKB-UniRule"/>
</dbReference>
<dbReference type="GO" id="GO:0003735">
    <property type="term" value="F:structural constituent of ribosome"/>
    <property type="evidence" value="ECO:0007669"/>
    <property type="project" value="InterPro"/>
</dbReference>
<dbReference type="GO" id="GO:0006412">
    <property type="term" value="P:translation"/>
    <property type="evidence" value="ECO:0007669"/>
    <property type="project" value="UniProtKB-UniRule"/>
</dbReference>
<dbReference type="FunFam" id="3.30.1370.30:FF:000002">
    <property type="entry name" value="30S ribosomal protein S8"/>
    <property type="match status" value="1"/>
</dbReference>
<dbReference type="FunFam" id="3.30.1490.10:FF:000001">
    <property type="entry name" value="30S ribosomal protein S8"/>
    <property type="match status" value="1"/>
</dbReference>
<dbReference type="Gene3D" id="3.30.1370.30">
    <property type="match status" value="1"/>
</dbReference>
<dbReference type="Gene3D" id="3.30.1490.10">
    <property type="match status" value="1"/>
</dbReference>
<dbReference type="HAMAP" id="MF_01302_B">
    <property type="entry name" value="Ribosomal_uS8_B"/>
    <property type="match status" value="1"/>
</dbReference>
<dbReference type="InterPro" id="IPR000630">
    <property type="entry name" value="Ribosomal_uS8"/>
</dbReference>
<dbReference type="InterPro" id="IPR047863">
    <property type="entry name" value="Ribosomal_uS8_CS"/>
</dbReference>
<dbReference type="InterPro" id="IPR035987">
    <property type="entry name" value="Ribosomal_uS8_sf"/>
</dbReference>
<dbReference type="NCBIfam" id="NF001109">
    <property type="entry name" value="PRK00136.1"/>
    <property type="match status" value="1"/>
</dbReference>
<dbReference type="PANTHER" id="PTHR11758">
    <property type="entry name" value="40S RIBOSOMAL PROTEIN S15A"/>
    <property type="match status" value="1"/>
</dbReference>
<dbReference type="Pfam" id="PF00410">
    <property type="entry name" value="Ribosomal_S8"/>
    <property type="match status" value="1"/>
</dbReference>
<dbReference type="SUPFAM" id="SSF56047">
    <property type="entry name" value="Ribosomal protein S8"/>
    <property type="match status" value="1"/>
</dbReference>
<dbReference type="PROSITE" id="PS00053">
    <property type="entry name" value="RIBOSOMAL_S8"/>
    <property type="match status" value="1"/>
</dbReference>
<comment type="function">
    <text evidence="1">One of the primary rRNA binding proteins, it binds directly to 16S rRNA central domain where it helps coordinate assembly of the platform of the 30S subunit.</text>
</comment>
<comment type="subunit">
    <text evidence="1">Part of the 30S ribosomal subunit. Contacts proteins S5 and S12.</text>
</comment>
<comment type="similarity">
    <text evidence="1">Belongs to the universal ribosomal protein uS8 family.</text>
</comment>
<gene>
    <name evidence="1" type="primary">rpsH</name>
    <name type="ordered locus">Rsph17025_2520</name>
</gene>
<name>RS8_CERS5</name>
<feature type="chain" id="PRO_1000051792" description="Small ribosomal subunit protein uS8">
    <location>
        <begin position="1"/>
        <end position="132"/>
    </location>
</feature>
<evidence type="ECO:0000255" key="1">
    <source>
        <dbReference type="HAMAP-Rule" id="MF_01302"/>
    </source>
</evidence>
<evidence type="ECO:0000305" key="2"/>